<sequence>MRCPKCNYNKSSVVDSRQAEDGNTIRRRRECESCHTRFTTFERLEELPLLVIKKDGTREQFSRDKILNGVVQSAQKRPVSSTDIENLISRIEQKVRTAYENEVSSTVIGNLVMEELAELDEITYVRFASVYKSFKDLDEIEELLQQITNRVRGKKKSSVDDEAY</sequence>
<proteinExistence type="inferred from homology"/>
<feature type="chain" id="PRO_1000206126" description="Transcriptional repressor NrdR">
    <location>
        <begin position="1"/>
        <end position="164"/>
    </location>
</feature>
<feature type="domain" description="ATP-cone" evidence="1">
    <location>
        <begin position="49"/>
        <end position="139"/>
    </location>
</feature>
<feature type="zinc finger region" evidence="1">
    <location>
        <begin position="3"/>
        <end position="34"/>
    </location>
</feature>
<gene>
    <name evidence="1" type="primary">nrdR</name>
    <name type="ordered locus">SZO_03090</name>
</gene>
<accession>C0MGE9</accession>
<organism>
    <name type="scientific">Streptococcus equi subsp. zooepidemicus (strain H70)</name>
    <dbReference type="NCBI Taxonomy" id="553483"/>
    <lineage>
        <taxon>Bacteria</taxon>
        <taxon>Bacillati</taxon>
        <taxon>Bacillota</taxon>
        <taxon>Bacilli</taxon>
        <taxon>Lactobacillales</taxon>
        <taxon>Streptococcaceae</taxon>
        <taxon>Streptococcus</taxon>
    </lineage>
</organism>
<reference key="1">
    <citation type="journal article" date="2009" name="PLoS Pathog.">
        <title>Genomic evidence for the evolution of Streptococcus equi: host restriction, increased virulence, and genetic exchange with human pathogens.</title>
        <authorList>
            <person name="Holden M.T.G."/>
            <person name="Heather Z."/>
            <person name="Paillot R."/>
            <person name="Steward K.F."/>
            <person name="Webb K."/>
            <person name="Ainslie F."/>
            <person name="Jourdan T."/>
            <person name="Bason N.C."/>
            <person name="Holroyd N.E."/>
            <person name="Mungall K."/>
            <person name="Quail M.A."/>
            <person name="Sanders M."/>
            <person name="Simmonds M."/>
            <person name="Willey D."/>
            <person name="Brooks K."/>
            <person name="Aanensen D.M."/>
            <person name="Spratt B.G."/>
            <person name="Jolley K.A."/>
            <person name="Maiden M.C.J."/>
            <person name="Kehoe M."/>
            <person name="Chanter N."/>
            <person name="Bentley S.D."/>
            <person name="Robinson C."/>
            <person name="Maskell D.J."/>
            <person name="Parkhill J."/>
            <person name="Waller A.S."/>
        </authorList>
    </citation>
    <scope>NUCLEOTIDE SEQUENCE [LARGE SCALE GENOMIC DNA]</scope>
    <source>
        <strain>H70</strain>
    </source>
</reference>
<dbReference type="EMBL" id="FM204884">
    <property type="protein sequence ID" value="CAW98115.1"/>
    <property type="molecule type" value="Genomic_DNA"/>
</dbReference>
<dbReference type="SMR" id="C0MGE9"/>
<dbReference type="KEGG" id="seq:SZO_03090"/>
<dbReference type="eggNOG" id="COG1327">
    <property type="taxonomic scope" value="Bacteria"/>
</dbReference>
<dbReference type="HOGENOM" id="CLU_108412_0_0_9"/>
<dbReference type="Proteomes" id="UP000001368">
    <property type="component" value="Chromosome"/>
</dbReference>
<dbReference type="GO" id="GO:0005524">
    <property type="term" value="F:ATP binding"/>
    <property type="evidence" value="ECO:0007669"/>
    <property type="project" value="UniProtKB-KW"/>
</dbReference>
<dbReference type="GO" id="GO:0003677">
    <property type="term" value="F:DNA binding"/>
    <property type="evidence" value="ECO:0007669"/>
    <property type="project" value="UniProtKB-KW"/>
</dbReference>
<dbReference type="GO" id="GO:0008270">
    <property type="term" value="F:zinc ion binding"/>
    <property type="evidence" value="ECO:0007669"/>
    <property type="project" value="UniProtKB-UniRule"/>
</dbReference>
<dbReference type="GO" id="GO:0045892">
    <property type="term" value="P:negative regulation of DNA-templated transcription"/>
    <property type="evidence" value="ECO:0007669"/>
    <property type="project" value="UniProtKB-UniRule"/>
</dbReference>
<dbReference type="HAMAP" id="MF_00440">
    <property type="entry name" value="NrdR"/>
    <property type="match status" value="1"/>
</dbReference>
<dbReference type="InterPro" id="IPR005144">
    <property type="entry name" value="ATP-cone_dom"/>
</dbReference>
<dbReference type="InterPro" id="IPR055173">
    <property type="entry name" value="NrdR-like_N"/>
</dbReference>
<dbReference type="InterPro" id="IPR003796">
    <property type="entry name" value="RNR_NrdR-like"/>
</dbReference>
<dbReference type="NCBIfam" id="TIGR00244">
    <property type="entry name" value="transcriptional regulator NrdR"/>
    <property type="match status" value="1"/>
</dbReference>
<dbReference type="PANTHER" id="PTHR30455">
    <property type="entry name" value="TRANSCRIPTIONAL REPRESSOR NRDR"/>
    <property type="match status" value="1"/>
</dbReference>
<dbReference type="PANTHER" id="PTHR30455:SF2">
    <property type="entry name" value="TRANSCRIPTIONAL REPRESSOR NRDR"/>
    <property type="match status" value="1"/>
</dbReference>
<dbReference type="Pfam" id="PF03477">
    <property type="entry name" value="ATP-cone"/>
    <property type="match status" value="1"/>
</dbReference>
<dbReference type="Pfam" id="PF22811">
    <property type="entry name" value="Zn_ribbon_NrdR"/>
    <property type="match status" value="1"/>
</dbReference>
<dbReference type="PROSITE" id="PS51161">
    <property type="entry name" value="ATP_CONE"/>
    <property type="match status" value="1"/>
</dbReference>
<name>NRDR_STRS7</name>
<keyword id="KW-0067">ATP-binding</keyword>
<keyword id="KW-0238">DNA-binding</keyword>
<keyword id="KW-0479">Metal-binding</keyword>
<keyword id="KW-0547">Nucleotide-binding</keyword>
<keyword id="KW-0678">Repressor</keyword>
<keyword id="KW-0804">Transcription</keyword>
<keyword id="KW-0805">Transcription regulation</keyword>
<keyword id="KW-0862">Zinc</keyword>
<keyword id="KW-0863">Zinc-finger</keyword>
<evidence type="ECO:0000255" key="1">
    <source>
        <dbReference type="HAMAP-Rule" id="MF_00440"/>
    </source>
</evidence>
<comment type="function">
    <text evidence="1">Negatively regulates transcription of bacterial ribonucleotide reductase nrd genes and operons by binding to NrdR-boxes.</text>
</comment>
<comment type="cofactor">
    <cofactor evidence="1">
        <name>Zn(2+)</name>
        <dbReference type="ChEBI" id="CHEBI:29105"/>
    </cofactor>
    <text evidence="1">Binds 1 zinc ion.</text>
</comment>
<comment type="similarity">
    <text evidence="1">Belongs to the NrdR family.</text>
</comment>
<protein>
    <recommendedName>
        <fullName evidence="1">Transcriptional repressor NrdR</fullName>
    </recommendedName>
</protein>